<evidence type="ECO:0000255" key="1">
    <source>
        <dbReference type="HAMAP-Rule" id="MF_01551"/>
    </source>
</evidence>
<name>RLMM_YERPN</name>
<comment type="function">
    <text evidence="1">Catalyzes the 2'-O-methylation at nucleotide C2498 in 23S rRNA.</text>
</comment>
<comment type="catalytic activity">
    <reaction evidence="1">
        <text>cytidine(2498) in 23S rRNA + S-adenosyl-L-methionine = 2'-O-methylcytidine(2498) in 23S rRNA + S-adenosyl-L-homocysteine + H(+)</text>
        <dbReference type="Rhea" id="RHEA:42788"/>
        <dbReference type="Rhea" id="RHEA-COMP:10244"/>
        <dbReference type="Rhea" id="RHEA-COMP:10245"/>
        <dbReference type="ChEBI" id="CHEBI:15378"/>
        <dbReference type="ChEBI" id="CHEBI:57856"/>
        <dbReference type="ChEBI" id="CHEBI:59789"/>
        <dbReference type="ChEBI" id="CHEBI:74495"/>
        <dbReference type="ChEBI" id="CHEBI:82748"/>
        <dbReference type="EC" id="2.1.1.186"/>
    </reaction>
</comment>
<comment type="subunit">
    <text evidence="1">Monomer.</text>
</comment>
<comment type="subcellular location">
    <subcellularLocation>
        <location evidence="1">Cytoplasm</location>
    </subcellularLocation>
</comment>
<comment type="similarity">
    <text evidence="1">Belongs to the class I-like SAM-binding methyltransferase superfamily. RNA methyltransferase RlmE family. RlmM subfamily.</text>
</comment>
<protein>
    <recommendedName>
        <fullName evidence="1">Ribosomal RNA large subunit methyltransferase M</fullName>
        <ecNumber evidence="1">2.1.1.186</ecNumber>
    </recommendedName>
    <alternativeName>
        <fullName evidence="1">23S rRNA (cytidine2498-2'-O)-methyltransferase</fullName>
    </alternativeName>
    <alternativeName>
        <fullName evidence="1">23S rRNA 2'-O-ribose methyltransferase RlmM</fullName>
    </alternativeName>
</protein>
<proteinExistence type="inferred from homology"/>
<reference key="1">
    <citation type="journal article" date="2006" name="J. Bacteriol.">
        <title>Complete genome sequence of Yersinia pestis strains Antiqua and Nepal516: evidence of gene reduction in an emerging pathogen.</title>
        <authorList>
            <person name="Chain P.S.G."/>
            <person name="Hu P."/>
            <person name="Malfatti S.A."/>
            <person name="Radnedge L."/>
            <person name="Larimer F."/>
            <person name="Vergez L.M."/>
            <person name="Worsham P."/>
            <person name="Chu M.C."/>
            <person name="Andersen G.L."/>
        </authorList>
    </citation>
    <scope>NUCLEOTIDE SEQUENCE [LARGE SCALE GENOMIC DNA]</scope>
    <source>
        <strain>Nepal516</strain>
    </source>
</reference>
<reference key="2">
    <citation type="submission" date="2009-04" db="EMBL/GenBank/DDBJ databases">
        <title>Yersinia pestis Nepal516A whole genome shotgun sequencing project.</title>
        <authorList>
            <person name="Plunkett G. III"/>
            <person name="Anderson B.D."/>
            <person name="Baumler D.J."/>
            <person name="Burland V."/>
            <person name="Cabot E.L."/>
            <person name="Glasner J.D."/>
            <person name="Mau B."/>
            <person name="Neeno-Eckwall E."/>
            <person name="Perna N.T."/>
            <person name="Munk A.C."/>
            <person name="Tapia R."/>
            <person name="Green L.D."/>
            <person name="Rogers Y.C."/>
            <person name="Detter J.C."/>
            <person name="Bruce D.C."/>
            <person name="Brettin T.S."/>
        </authorList>
    </citation>
    <scope>NUCLEOTIDE SEQUENCE [LARGE SCALE GENOMIC DNA]</scope>
    <source>
        <strain>Nepal516</strain>
    </source>
</reference>
<gene>
    <name evidence="1" type="primary">rlmM</name>
    <name type="ordered locus">YPN_2971</name>
    <name type="ORF">YP516_3364</name>
</gene>
<organism>
    <name type="scientific">Yersinia pestis bv. Antiqua (strain Nepal516)</name>
    <dbReference type="NCBI Taxonomy" id="377628"/>
    <lineage>
        <taxon>Bacteria</taxon>
        <taxon>Pseudomonadati</taxon>
        <taxon>Pseudomonadota</taxon>
        <taxon>Gammaproteobacteria</taxon>
        <taxon>Enterobacterales</taxon>
        <taxon>Yersiniaceae</taxon>
        <taxon>Yersinia</taxon>
    </lineage>
</organism>
<sequence>MNNKIALYCRSGFEKECAAEITEKAAQLEIFGFARVKENSGYVLFECYQLEDADRLIREIPFREFIFARQMMVVGELLKDLPPEDRVSPIVGMLVGVIEKAGELRVEVADTNESKELLKFCRKLTVPLRSALREQKILSARENAHRPVVHVFFIAPGCCYVGYSYSNNNSPFYMGIPRLKFPSDAPSRSTLKLEEAFHVFIPADEWEERLASGMHAVDLGACPGGWTYQLVQRSMMIQAVDNGLMAQSLMDTGQVTHHRADGFKYEPTRSNIYWLVCDMVEKPTKVTQLITKWLVNGWCREAIFNLKLPMKKRYEEVVQNLAMMDEQLKENGINADIHAKQLYHDREEVTVHVRRIWSGAPGRRDERY</sequence>
<accession>Q1CFD2</accession>
<accession>C4GWZ7</accession>
<feature type="chain" id="PRO_0000314553" description="Ribosomal RNA large subunit methyltransferase M">
    <location>
        <begin position="1"/>
        <end position="368"/>
    </location>
</feature>
<feature type="active site" description="Proton acceptor" evidence="1">
    <location>
        <position position="307"/>
    </location>
</feature>
<feature type="binding site" evidence="1">
    <location>
        <position position="189"/>
    </location>
    <ligand>
        <name>S-adenosyl-L-methionine</name>
        <dbReference type="ChEBI" id="CHEBI:59789"/>
    </ligand>
</feature>
<feature type="binding site" evidence="1">
    <location>
        <begin position="222"/>
        <end position="225"/>
    </location>
    <ligand>
        <name>S-adenosyl-L-methionine</name>
        <dbReference type="ChEBI" id="CHEBI:59789"/>
    </ligand>
</feature>
<feature type="binding site" evidence="1">
    <location>
        <position position="241"/>
    </location>
    <ligand>
        <name>S-adenosyl-L-methionine</name>
        <dbReference type="ChEBI" id="CHEBI:59789"/>
    </ligand>
</feature>
<feature type="binding site" evidence="1">
    <location>
        <position position="261"/>
    </location>
    <ligand>
        <name>S-adenosyl-L-methionine</name>
        <dbReference type="ChEBI" id="CHEBI:59789"/>
    </ligand>
</feature>
<feature type="binding site" evidence="1">
    <location>
        <position position="278"/>
    </location>
    <ligand>
        <name>S-adenosyl-L-methionine</name>
        <dbReference type="ChEBI" id="CHEBI:59789"/>
    </ligand>
</feature>
<keyword id="KW-0963">Cytoplasm</keyword>
<keyword id="KW-0489">Methyltransferase</keyword>
<keyword id="KW-0698">rRNA processing</keyword>
<keyword id="KW-0949">S-adenosyl-L-methionine</keyword>
<keyword id="KW-0808">Transferase</keyword>
<dbReference type="EC" id="2.1.1.186" evidence="1"/>
<dbReference type="EMBL" id="CP000305">
    <property type="protein sequence ID" value="ABG19298.1"/>
    <property type="molecule type" value="Genomic_DNA"/>
</dbReference>
<dbReference type="EMBL" id="ACNQ01000017">
    <property type="protein sequence ID" value="EEO75447.1"/>
    <property type="molecule type" value="Genomic_DNA"/>
</dbReference>
<dbReference type="RefSeq" id="WP_002212119.1">
    <property type="nucleotide sequence ID" value="NZ_ACNQ01000017.1"/>
</dbReference>
<dbReference type="SMR" id="Q1CFD2"/>
<dbReference type="GeneID" id="57977530"/>
<dbReference type="KEGG" id="ypn:YPN_2971"/>
<dbReference type="HOGENOM" id="CLU_043780_0_0_6"/>
<dbReference type="Proteomes" id="UP000008936">
    <property type="component" value="Chromosome"/>
</dbReference>
<dbReference type="GO" id="GO:0005737">
    <property type="term" value="C:cytoplasm"/>
    <property type="evidence" value="ECO:0007669"/>
    <property type="project" value="UniProtKB-SubCell"/>
</dbReference>
<dbReference type="GO" id="GO:0008757">
    <property type="term" value="F:S-adenosylmethionine-dependent methyltransferase activity"/>
    <property type="evidence" value="ECO:0007669"/>
    <property type="project" value="UniProtKB-UniRule"/>
</dbReference>
<dbReference type="GO" id="GO:0032259">
    <property type="term" value="P:methylation"/>
    <property type="evidence" value="ECO:0007669"/>
    <property type="project" value="UniProtKB-KW"/>
</dbReference>
<dbReference type="GO" id="GO:0006364">
    <property type="term" value="P:rRNA processing"/>
    <property type="evidence" value="ECO:0007669"/>
    <property type="project" value="UniProtKB-UniRule"/>
</dbReference>
<dbReference type="Gene3D" id="3.30.2300.20">
    <property type="match status" value="1"/>
</dbReference>
<dbReference type="Gene3D" id="3.30.70.2810">
    <property type="match status" value="1"/>
</dbReference>
<dbReference type="Gene3D" id="3.40.50.150">
    <property type="entry name" value="Vaccinia Virus protein VP39"/>
    <property type="match status" value="1"/>
</dbReference>
<dbReference type="HAMAP" id="MF_01551">
    <property type="entry name" value="23SrRNA_methyltr_M"/>
    <property type="match status" value="1"/>
</dbReference>
<dbReference type="InterPro" id="IPR040739">
    <property type="entry name" value="RlmM_FDX"/>
</dbReference>
<dbReference type="InterPro" id="IPR048646">
    <property type="entry name" value="RlmM_THUMP-like"/>
</dbReference>
<dbReference type="InterPro" id="IPR002877">
    <property type="entry name" value="RNA_MeTrfase_FtsJ_dom"/>
</dbReference>
<dbReference type="InterPro" id="IPR011224">
    <property type="entry name" value="rRNA_MeTrfase_M"/>
</dbReference>
<dbReference type="InterPro" id="IPR029063">
    <property type="entry name" value="SAM-dependent_MTases_sf"/>
</dbReference>
<dbReference type="NCBIfam" id="NF008734">
    <property type="entry name" value="PRK11760.1"/>
    <property type="match status" value="1"/>
</dbReference>
<dbReference type="PANTHER" id="PTHR37524">
    <property type="entry name" value="RIBOSOMAL RNA LARGE SUBUNIT METHYLTRANSFERASE M"/>
    <property type="match status" value="1"/>
</dbReference>
<dbReference type="PANTHER" id="PTHR37524:SF2">
    <property type="entry name" value="RIBOSOMAL RNA METHYLTRANSFERASE FTSJ DOMAIN-CONTAINING PROTEIN"/>
    <property type="match status" value="1"/>
</dbReference>
<dbReference type="Pfam" id="PF01728">
    <property type="entry name" value="FtsJ"/>
    <property type="match status" value="1"/>
</dbReference>
<dbReference type="Pfam" id="PF18125">
    <property type="entry name" value="RlmM_FDX"/>
    <property type="match status" value="1"/>
</dbReference>
<dbReference type="Pfam" id="PF21239">
    <property type="entry name" value="RLMM_N"/>
    <property type="match status" value="1"/>
</dbReference>
<dbReference type="PIRSF" id="PIRSF028774">
    <property type="entry name" value="UCP028774"/>
    <property type="match status" value="1"/>
</dbReference>
<dbReference type="SUPFAM" id="SSF53335">
    <property type="entry name" value="S-adenosyl-L-methionine-dependent methyltransferases"/>
    <property type="match status" value="1"/>
</dbReference>